<keyword id="KW-0067">ATP-binding</keyword>
<keyword id="KW-0418">Kinase</keyword>
<keyword id="KW-0547">Nucleotide-binding</keyword>
<keyword id="KW-1185">Reference proteome</keyword>
<keyword id="KW-0723">Serine/threonine-protein kinase</keyword>
<keyword id="KW-0808">Transferase</keyword>
<sequence length="339" mass="38974">MEKYEMVKDLGFGNFGLARLMRNKQTNELVAVKFIDRGYKIDENVAREIINHRALNHPNIVRFKEVVLTPTHLGIVMEYAAGGELFERISSVGRFSEAEARYFFQQLICGVHYLHALQICHRDLKLENTLLDGSPAPRLKICDFGYSKSSVLHSNPKSTVGTPAYIAPEVFCRSEYDGKSVDVWSCGVALYVMLVGAYPFEDPKDPRNFRKTVQKIMAVNYKIPGYVHISEDCRKLLSRIFVANPLHRSTLKEIKSHAWFLKNLPRELKEPAQAIYYQRNVNLINFSPQRVEEIMKIVGEARTIPNLSRPVESLGSDKKDDDEEEYLDANDEEWYDDYA</sequence>
<dbReference type="EC" id="2.7.11.1"/>
<dbReference type="EMBL" id="AC004401">
    <property type="protein sequence ID" value="AAC17819.1"/>
    <property type="molecule type" value="Genomic_DNA"/>
</dbReference>
<dbReference type="EMBL" id="CP002685">
    <property type="protein sequence ID" value="AEC07398.1"/>
    <property type="molecule type" value="Genomic_DNA"/>
</dbReference>
<dbReference type="EMBL" id="BT003142">
    <property type="protein sequence ID" value="AAO24574.1"/>
    <property type="molecule type" value="mRNA"/>
</dbReference>
<dbReference type="EMBL" id="AK228137">
    <property type="protein sequence ID" value="BAF00094.1"/>
    <property type="molecule type" value="mRNA"/>
</dbReference>
<dbReference type="PIR" id="F84619">
    <property type="entry name" value="F84619"/>
</dbReference>
<dbReference type="RefSeq" id="NP_179885.1">
    <property type="nucleotide sequence ID" value="NM_127867.5"/>
</dbReference>
<dbReference type="SMR" id="O64812"/>
<dbReference type="BioGRID" id="2186">
    <property type="interactions" value="1"/>
</dbReference>
<dbReference type="FunCoup" id="O64812">
    <property type="interactions" value="1044"/>
</dbReference>
<dbReference type="STRING" id="3702.O64812"/>
<dbReference type="PaxDb" id="3702-AT2G23030.1"/>
<dbReference type="ProteomicsDB" id="226877"/>
<dbReference type="EnsemblPlants" id="AT2G23030.1">
    <property type="protein sequence ID" value="AT2G23030.1"/>
    <property type="gene ID" value="AT2G23030"/>
</dbReference>
<dbReference type="GeneID" id="816833"/>
<dbReference type="Gramene" id="AT2G23030.1">
    <property type="protein sequence ID" value="AT2G23030.1"/>
    <property type="gene ID" value="AT2G23030"/>
</dbReference>
<dbReference type="KEGG" id="ath:AT2G23030"/>
<dbReference type="Araport" id="AT2G23030"/>
<dbReference type="TAIR" id="AT2G23030">
    <property type="gene designation" value="SNRK2.9"/>
</dbReference>
<dbReference type="eggNOG" id="KOG0583">
    <property type="taxonomic scope" value="Eukaryota"/>
</dbReference>
<dbReference type="HOGENOM" id="CLU_000288_63_0_1"/>
<dbReference type="InParanoid" id="O64812"/>
<dbReference type="OMA" id="VFCRSEY"/>
<dbReference type="PhylomeDB" id="O64812"/>
<dbReference type="PRO" id="PR:O64812"/>
<dbReference type="Proteomes" id="UP000006548">
    <property type="component" value="Chromosome 2"/>
</dbReference>
<dbReference type="ExpressionAtlas" id="O64812">
    <property type="expression patterns" value="baseline and differential"/>
</dbReference>
<dbReference type="GO" id="GO:0005773">
    <property type="term" value="C:vacuole"/>
    <property type="evidence" value="ECO:0007005"/>
    <property type="project" value="TAIR"/>
</dbReference>
<dbReference type="GO" id="GO:0005524">
    <property type="term" value="F:ATP binding"/>
    <property type="evidence" value="ECO:0007669"/>
    <property type="project" value="UniProtKB-KW"/>
</dbReference>
<dbReference type="GO" id="GO:0106310">
    <property type="term" value="F:protein serine kinase activity"/>
    <property type="evidence" value="ECO:0007669"/>
    <property type="project" value="RHEA"/>
</dbReference>
<dbReference type="GO" id="GO:0004674">
    <property type="term" value="F:protein serine/threonine kinase activity"/>
    <property type="evidence" value="ECO:0007669"/>
    <property type="project" value="UniProtKB-KW"/>
</dbReference>
<dbReference type="GO" id="GO:0006970">
    <property type="term" value="P:response to osmotic stress"/>
    <property type="evidence" value="ECO:0000316"/>
    <property type="project" value="TAIR"/>
</dbReference>
<dbReference type="FunFam" id="1.10.510.10:FF:000132">
    <property type="entry name" value="Serine/threonine-protein kinase SRK2A"/>
    <property type="match status" value="1"/>
</dbReference>
<dbReference type="FunFam" id="3.30.200.20:FF:000045">
    <property type="entry name" value="Serine/threonine-protein kinase SRK2E"/>
    <property type="match status" value="1"/>
</dbReference>
<dbReference type="Gene3D" id="3.30.200.20">
    <property type="entry name" value="Phosphorylase Kinase, domain 1"/>
    <property type="match status" value="1"/>
</dbReference>
<dbReference type="Gene3D" id="1.10.510.10">
    <property type="entry name" value="Transferase(Phosphotransferase) domain 1"/>
    <property type="match status" value="1"/>
</dbReference>
<dbReference type="InterPro" id="IPR011009">
    <property type="entry name" value="Kinase-like_dom_sf"/>
</dbReference>
<dbReference type="InterPro" id="IPR000719">
    <property type="entry name" value="Prot_kinase_dom"/>
</dbReference>
<dbReference type="InterPro" id="IPR017441">
    <property type="entry name" value="Protein_kinase_ATP_BS"/>
</dbReference>
<dbReference type="InterPro" id="IPR008271">
    <property type="entry name" value="Ser/Thr_kinase_AS"/>
</dbReference>
<dbReference type="PANTHER" id="PTHR24343">
    <property type="entry name" value="SERINE/THREONINE KINASE"/>
    <property type="match status" value="1"/>
</dbReference>
<dbReference type="PANTHER" id="PTHR24343:SF504">
    <property type="entry name" value="SERINE_THREONINE-PROTEIN KINASE SRK2J"/>
    <property type="match status" value="1"/>
</dbReference>
<dbReference type="Pfam" id="PF00069">
    <property type="entry name" value="Pkinase"/>
    <property type="match status" value="1"/>
</dbReference>
<dbReference type="SMART" id="SM00220">
    <property type="entry name" value="S_TKc"/>
    <property type="match status" value="1"/>
</dbReference>
<dbReference type="SUPFAM" id="SSF56112">
    <property type="entry name" value="Protein kinase-like (PK-like)"/>
    <property type="match status" value="1"/>
</dbReference>
<dbReference type="PROSITE" id="PS00107">
    <property type="entry name" value="PROTEIN_KINASE_ATP"/>
    <property type="match status" value="1"/>
</dbReference>
<dbReference type="PROSITE" id="PS50011">
    <property type="entry name" value="PROTEIN_KINASE_DOM"/>
    <property type="match status" value="1"/>
</dbReference>
<dbReference type="PROSITE" id="PS00108">
    <property type="entry name" value="PROTEIN_KINASE_ST"/>
    <property type="match status" value="1"/>
</dbReference>
<reference key="1">
    <citation type="journal article" date="1999" name="Nature">
        <title>Sequence and analysis of chromosome 2 of the plant Arabidopsis thaliana.</title>
        <authorList>
            <person name="Lin X."/>
            <person name="Kaul S."/>
            <person name="Rounsley S.D."/>
            <person name="Shea T.P."/>
            <person name="Benito M.-I."/>
            <person name="Town C.D."/>
            <person name="Fujii C.Y."/>
            <person name="Mason T.M."/>
            <person name="Bowman C.L."/>
            <person name="Barnstead M.E."/>
            <person name="Feldblyum T.V."/>
            <person name="Buell C.R."/>
            <person name="Ketchum K.A."/>
            <person name="Lee J.J."/>
            <person name="Ronning C.M."/>
            <person name="Koo H.L."/>
            <person name="Moffat K.S."/>
            <person name="Cronin L.A."/>
            <person name="Shen M."/>
            <person name="Pai G."/>
            <person name="Van Aken S."/>
            <person name="Umayam L."/>
            <person name="Tallon L.J."/>
            <person name="Gill J.E."/>
            <person name="Adams M.D."/>
            <person name="Carrera A.J."/>
            <person name="Creasy T.H."/>
            <person name="Goodman H.M."/>
            <person name="Somerville C.R."/>
            <person name="Copenhaver G.P."/>
            <person name="Preuss D."/>
            <person name="Nierman W.C."/>
            <person name="White O."/>
            <person name="Eisen J.A."/>
            <person name="Salzberg S.L."/>
            <person name="Fraser C.M."/>
            <person name="Venter J.C."/>
        </authorList>
    </citation>
    <scope>NUCLEOTIDE SEQUENCE [LARGE SCALE GENOMIC DNA]</scope>
    <source>
        <strain>cv. Columbia</strain>
    </source>
</reference>
<reference key="2">
    <citation type="journal article" date="2017" name="Plant J.">
        <title>Araport11: a complete reannotation of the Arabidopsis thaliana reference genome.</title>
        <authorList>
            <person name="Cheng C.Y."/>
            <person name="Krishnakumar V."/>
            <person name="Chan A.P."/>
            <person name="Thibaud-Nissen F."/>
            <person name="Schobel S."/>
            <person name="Town C.D."/>
        </authorList>
    </citation>
    <scope>GENOME REANNOTATION</scope>
    <source>
        <strain>cv. Columbia</strain>
    </source>
</reference>
<reference key="3">
    <citation type="journal article" date="2003" name="Science">
        <title>Empirical analysis of transcriptional activity in the Arabidopsis genome.</title>
        <authorList>
            <person name="Yamada K."/>
            <person name="Lim J."/>
            <person name="Dale J.M."/>
            <person name="Chen H."/>
            <person name="Shinn P."/>
            <person name="Palm C.J."/>
            <person name="Southwick A.M."/>
            <person name="Wu H.C."/>
            <person name="Kim C.J."/>
            <person name="Nguyen M."/>
            <person name="Pham P.K."/>
            <person name="Cheuk R.F."/>
            <person name="Karlin-Newmann G."/>
            <person name="Liu S.X."/>
            <person name="Lam B."/>
            <person name="Sakano H."/>
            <person name="Wu T."/>
            <person name="Yu G."/>
            <person name="Miranda M."/>
            <person name="Quach H.L."/>
            <person name="Tripp M."/>
            <person name="Chang C.H."/>
            <person name="Lee J.M."/>
            <person name="Toriumi M.J."/>
            <person name="Chan M.M."/>
            <person name="Tang C.C."/>
            <person name="Onodera C.S."/>
            <person name="Deng J.M."/>
            <person name="Akiyama K."/>
            <person name="Ansari Y."/>
            <person name="Arakawa T."/>
            <person name="Banh J."/>
            <person name="Banno F."/>
            <person name="Bowser L."/>
            <person name="Brooks S.Y."/>
            <person name="Carninci P."/>
            <person name="Chao Q."/>
            <person name="Choy N."/>
            <person name="Enju A."/>
            <person name="Goldsmith A.D."/>
            <person name="Gurjal M."/>
            <person name="Hansen N.F."/>
            <person name="Hayashizaki Y."/>
            <person name="Johnson-Hopson C."/>
            <person name="Hsuan V.W."/>
            <person name="Iida K."/>
            <person name="Karnes M."/>
            <person name="Khan S."/>
            <person name="Koesema E."/>
            <person name="Ishida J."/>
            <person name="Jiang P.X."/>
            <person name="Jones T."/>
            <person name="Kawai J."/>
            <person name="Kamiya A."/>
            <person name="Meyers C."/>
            <person name="Nakajima M."/>
            <person name="Narusaka M."/>
            <person name="Seki M."/>
            <person name="Sakurai T."/>
            <person name="Satou M."/>
            <person name="Tamse R."/>
            <person name="Vaysberg M."/>
            <person name="Wallender E.K."/>
            <person name="Wong C."/>
            <person name="Yamamura Y."/>
            <person name="Yuan S."/>
            <person name="Shinozaki K."/>
            <person name="Davis R.W."/>
            <person name="Theologis A."/>
            <person name="Ecker J.R."/>
        </authorList>
    </citation>
    <scope>NUCLEOTIDE SEQUENCE [LARGE SCALE MRNA]</scope>
    <source>
        <strain>cv. Columbia</strain>
    </source>
</reference>
<reference key="4">
    <citation type="submission" date="2006-07" db="EMBL/GenBank/DDBJ databases">
        <title>Large-scale analysis of RIKEN Arabidopsis full-length (RAFL) cDNAs.</title>
        <authorList>
            <person name="Totoki Y."/>
            <person name="Seki M."/>
            <person name="Ishida J."/>
            <person name="Nakajima M."/>
            <person name="Enju A."/>
            <person name="Kamiya A."/>
            <person name="Narusaka M."/>
            <person name="Shin-i T."/>
            <person name="Nakagawa M."/>
            <person name="Sakamoto N."/>
            <person name="Oishi K."/>
            <person name="Kohara Y."/>
            <person name="Kobayashi M."/>
            <person name="Toyoda A."/>
            <person name="Sakaki Y."/>
            <person name="Sakurai T."/>
            <person name="Iida K."/>
            <person name="Akiyama K."/>
            <person name="Satou M."/>
            <person name="Toyoda T."/>
            <person name="Konagaya A."/>
            <person name="Carninci P."/>
            <person name="Kawai J."/>
            <person name="Hayashizaki Y."/>
            <person name="Shinozaki K."/>
        </authorList>
    </citation>
    <scope>NUCLEOTIDE SEQUENCE [LARGE SCALE MRNA]</scope>
    <source>
        <strain>cv. Columbia</strain>
    </source>
</reference>
<reference key="5">
    <citation type="journal article" date="2003" name="Plant Physiol.">
        <title>The Arabidopsis CDPK-SnRK superfamily of protein kinases.</title>
        <authorList>
            <person name="Hrabak E.M."/>
            <person name="Chan C.W.M."/>
            <person name="Gribskov M."/>
            <person name="Harper J.F."/>
            <person name="Choi J.H."/>
            <person name="Halford N."/>
            <person name="Kudla J."/>
            <person name="Luan S."/>
            <person name="Nimmo H.G."/>
            <person name="Sussman M.R."/>
            <person name="Thomas M."/>
            <person name="Walker-Simmons K."/>
            <person name="Zhu J.-K."/>
            <person name="Harmon A.C."/>
        </authorList>
    </citation>
    <scope>GENE FAMILY</scope>
    <scope>NOMENCLATURE</scope>
</reference>
<reference key="6">
    <citation type="journal article" date="2004" name="J. Biol. Chem.">
        <title>Identification of nine sucrose nonfermenting 1-related protein kinases 2 activated by hyperosmotic and saline stresses in Arabidopsis thaliana.</title>
        <authorList>
            <person name="Boudsocq M."/>
            <person name="Barbier-Brygoo H."/>
            <person name="Lauriere C."/>
        </authorList>
    </citation>
    <scope>TISSUE SPECIFICITY</scope>
    <scope>INDUCTION</scope>
</reference>
<reference key="7">
    <citation type="journal article" date="2006" name="J. Biol. Chem.">
        <title>The regulatory domain of SRK2E/OST1/SnRK2.6 interacts with ABI1 and integrates abscisic acid (ABA) and osmotic stress signals controlling stomatal closure in Arabidopsis.</title>
        <authorList>
            <person name="Yoshida R."/>
            <person name="Umezawa T."/>
            <person name="Mizoguchi T."/>
            <person name="Takahashi S."/>
            <person name="Takahashi F."/>
            <person name="Shinozaki K."/>
        </authorList>
    </citation>
    <scope>GENE FAMILY</scope>
</reference>
<evidence type="ECO:0000255" key="1">
    <source>
        <dbReference type="PROSITE-ProRule" id="PRU00159"/>
    </source>
</evidence>
<evidence type="ECO:0000255" key="2">
    <source>
        <dbReference type="PROSITE-ProRule" id="PRU10027"/>
    </source>
</evidence>
<evidence type="ECO:0000256" key="3">
    <source>
        <dbReference type="SAM" id="MobiDB-lite"/>
    </source>
</evidence>
<evidence type="ECO:0000269" key="4">
    <source>
    </source>
</evidence>
<evidence type="ECO:0000305" key="5"/>
<comment type="catalytic activity">
    <reaction>
        <text>L-seryl-[protein] + ATP = O-phospho-L-seryl-[protein] + ADP + H(+)</text>
        <dbReference type="Rhea" id="RHEA:17989"/>
        <dbReference type="Rhea" id="RHEA-COMP:9863"/>
        <dbReference type="Rhea" id="RHEA-COMP:11604"/>
        <dbReference type="ChEBI" id="CHEBI:15378"/>
        <dbReference type="ChEBI" id="CHEBI:29999"/>
        <dbReference type="ChEBI" id="CHEBI:30616"/>
        <dbReference type="ChEBI" id="CHEBI:83421"/>
        <dbReference type="ChEBI" id="CHEBI:456216"/>
        <dbReference type="EC" id="2.7.11.1"/>
    </reaction>
</comment>
<comment type="catalytic activity">
    <reaction>
        <text>L-threonyl-[protein] + ATP = O-phospho-L-threonyl-[protein] + ADP + H(+)</text>
        <dbReference type="Rhea" id="RHEA:46608"/>
        <dbReference type="Rhea" id="RHEA-COMP:11060"/>
        <dbReference type="Rhea" id="RHEA-COMP:11605"/>
        <dbReference type="ChEBI" id="CHEBI:15378"/>
        <dbReference type="ChEBI" id="CHEBI:30013"/>
        <dbReference type="ChEBI" id="CHEBI:30616"/>
        <dbReference type="ChEBI" id="CHEBI:61977"/>
        <dbReference type="ChEBI" id="CHEBI:456216"/>
        <dbReference type="EC" id="2.7.11.1"/>
    </reaction>
</comment>
<comment type="tissue specificity">
    <text evidence="4">Expressed in seedlings.</text>
</comment>
<comment type="induction">
    <text evidence="4">By salt and osmotic stress (at protein level).</text>
</comment>
<comment type="similarity">
    <text evidence="1">Belongs to the protein kinase superfamily. Ser/Thr protein kinase family.</text>
</comment>
<organism>
    <name type="scientific">Arabidopsis thaliana</name>
    <name type="common">Mouse-ear cress</name>
    <dbReference type="NCBI Taxonomy" id="3702"/>
    <lineage>
        <taxon>Eukaryota</taxon>
        <taxon>Viridiplantae</taxon>
        <taxon>Streptophyta</taxon>
        <taxon>Embryophyta</taxon>
        <taxon>Tracheophyta</taxon>
        <taxon>Spermatophyta</taxon>
        <taxon>Magnoliopsida</taxon>
        <taxon>eudicotyledons</taxon>
        <taxon>Gunneridae</taxon>
        <taxon>Pentapetalae</taxon>
        <taxon>rosids</taxon>
        <taxon>malvids</taxon>
        <taxon>Brassicales</taxon>
        <taxon>Brassicaceae</taxon>
        <taxon>Camelineae</taxon>
        <taxon>Arabidopsis</taxon>
    </lineage>
</organism>
<name>SRK2J_ARATH</name>
<accession>O64812</accession>
<accession>Q84WJ7</accession>
<feature type="chain" id="PRO_0000345164" description="Serine/threonine-protein kinase SRK2J">
    <location>
        <begin position="1"/>
        <end position="339"/>
    </location>
</feature>
<feature type="domain" description="Protein kinase" evidence="1">
    <location>
        <begin position="4"/>
        <end position="260"/>
    </location>
</feature>
<feature type="region of interest" description="Disordered" evidence="3">
    <location>
        <begin position="308"/>
        <end position="339"/>
    </location>
</feature>
<feature type="compositionally biased region" description="Acidic residues" evidence="3">
    <location>
        <begin position="320"/>
        <end position="339"/>
    </location>
</feature>
<feature type="active site" description="Proton acceptor" evidence="1 2">
    <location>
        <position position="123"/>
    </location>
</feature>
<feature type="binding site" evidence="1">
    <location>
        <begin position="10"/>
        <end position="18"/>
    </location>
    <ligand>
        <name>ATP</name>
        <dbReference type="ChEBI" id="CHEBI:30616"/>
    </ligand>
</feature>
<feature type="binding site" evidence="1">
    <location>
        <position position="33"/>
    </location>
    <ligand>
        <name>ATP</name>
        <dbReference type="ChEBI" id="CHEBI:30616"/>
    </ligand>
</feature>
<feature type="sequence conflict" description="In Ref. 3; BAF00094 and 4; AAO24574." evidence="5" ref="3 4">
    <original>E</original>
    <variation>G</variation>
    <location>
        <position position="169"/>
    </location>
</feature>
<feature type="sequence conflict" description="In Ref. 3; BAF00094 and 4; AAO24574." evidence="5" ref="3 4">
    <original>A</original>
    <variation>V</variation>
    <location>
        <position position="258"/>
    </location>
</feature>
<protein>
    <recommendedName>
        <fullName>Serine/threonine-protein kinase SRK2J</fullName>
        <ecNumber>2.7.11.1</ecNumber>
    </recommendedName>
    <alternativeName>
        <fullName>OST1-kinase-like 10</fullName>
    </alternativeName>
    <alternativeName>
        <fullName>SNF1-related kinase 2.9</fullName>
        <shortName>SnRK2.9</shortName>
    </alternativeName>
</protein>
<proteinExistence type="evidence at protein level"/>
<gene>
    <name type="primary">SRK2J</name>
    <name type="synonym">OSKL10</name>
    <name type="synonym">SNRK2.9</name>
    <name type="ordered locus">At2g23030</name>
    <name type="ORF">F21P24.9</name>
</gene>